<evidence type="ECO:0000255" key="1">
    <source>
        <dbReference type="HAMAP-Rule" id="MF_00508"/>
    </source>
</evidence>
<evidence type="ECO:0000305" key="2"/>
<name>RS10_RHILO</name>
<proteinExistence type="inferred from homology"/>
<keyword id="KW-0687">Ribonucleoprotein</keyword>
<keyword id="KW-0689">Ribosomal protein</keyword>
<gene>
    <name evidence="1" type="primary">rpsJ</name>
    <name type="ordered locus">mlr0289</name>
</gene>
<reference key="1">
    <citation type="journal article" date="2000" name="DNA Res.">
        <title>Complete genome structure of the nitrogen-fixing symbiotic bacterium Mesorhizobium loti.</title>
        <authorList>
            <person name="Kaneko T."/>
            <person name="Nakamura Y."/>
            <person name="Sato S."/>
            <person name="Asamizu E."/>
            <person name="Kato T."/>
            <person name="Sasamoto S."/>
            <person name="Watanabe A."/>
            <person name="Idesawa K."/>
            <person name="Ishikawa A."/>
            <person name="Kawashima K."/>
            <person name="Kimura T."/>
            <person name="Kishida Y."/>
            <person name="Kiyokawa C."/>
            <person name="Kohara M."/>
            <person name="Matsumoto M."/>
            <person name="Matsuno A."/>
            <person name="Mochizuki Y."/>
            <person name="Nakayama S."/>
            <person name="Nakazaki N."/>
            <person name="Shimpo S."/>
            <person name="Sugimoto M."/>
            <person name="Takeuchi C."/>
            <person name="Yamada M."/>
            <person name="Tabata S."/>
        </authorList>
    </citation>
    <scope>NUCLEOTIDE SEQUENCE [LARGE SCALE GENOMIC DNA]</scope>
    <source>
        <strain>LMG 29417 / CECT 9101 / MAFF 303099</strain>
    </source>
</reference>
<accession>Q98N58</accession>
<sequence length="102" mass="11555">MNGQNIRIRLKAFDHRVLDASTKEIVSTAKRTGANVRGPIPLPTRIEKFTVNRSPHVDKKSREQFEMRTHKRLLDIVDPTPQTVDALMKLDLAAGVDVEIKL</sequence>
<dbReference type="EMBL" id="BA000012">
    <property type="protein sequence ID" value="BAB47905.1"/>
    <property type="molecule type" value="Genomic_DNA"/>
</dbReference>
<dbReference type="RefSeq" id="WP_010909272.1">
    <property type="nucleotide sequence ID" value="NC_002678.2"/>
</dbReference>
<dbReference type="SMR" id="Q98N58"/>
<dbReference type="GeneID" id="91561421"/>
<dbReference type="KEGG" id="mlo:mlr0289"/>
<dbReference type="eggNOG" id="COG0051">
    <property type="taxonomic scope" value="Bacteria"/>
</dbReference>
<dbReference type="HOGENOM" id="CLU_122625_1_3_5"/>
<dbReference type="Proteomes" id="UP000000552">
    <property type="component" value="Chromosome"/>
</dbReference>
<dbReference type="GO" id="GO:1990904">
    <property type="term" value="C:ribonucleoprotein complex"/>
    <property type="evidence" value="ECO:0007669"/>
    <property type="project" value="UniProtKB-KW"/>
</dbReference>
<dbReference type="GO" id="GO:0005840">
    <property type="term" value="C:ribosome"/>
    <property type="evidence" value="ECO:0007669"/>
    <property type="project" value="UniProtKB-KW"/>
</dbReference>
<dbReference type="GO" id="GO:0003735">
    <property type="term" value="F:structural constituent of ribosome"/>
    <property type="evidence" value="ECO:0007669"/>
    <property type="project" value="InterPro"/>
</dbReference>
<dbReference type="GO" id="GO:0000049">
    <property type="term" value="F:tRNA binding"/>
    <property type="evidence" value="ECO:0007669"/>
    <property type="project" value="UniProtKB-UniRule"/>
</dbReference>
<dbReference type="GO" id="GO:0006412">
    <property type="term" value="P:translation"/>
    <property type="evidence" value="ECO:0007669"/>
    <property type="project" value="UniProtKB-UniRule"/>
</dbReference>
<dbReference type="FunFam" id="3.30.70.600:FF:000001">
    <property type="entry name" value="30S ribosomal protein S10"/>
    <property type="match status" value="1"/>
</dbReference>
<dbReference type="Gene3D" id="3.30.70.600">
    <property type="entry name" value="Ribosomal protein S10 domain"/>
    <property type="match status" value="1"/>
</dbReference>
<dbReference type="HAMAP" id="MF_00508">
    <property type="entry name" value="Ribosomal_uS10"/>
    <property type="match status" value="1"/>
</dbReference>
<dbReference type="InterPro" id="IPR001848">
    <property type="entry name" value="Ribosomal_uS10"/>
</dbReference>
<dbReference type="InterPro" id="IPR018268">
    <property type="entry name" value="Ribosomal_uS10_CS"/>
</dbReference>
<dbReference type="InterPro" id="IPR027486">
    <property type="entry name" value="Ribosomal_uS10_dom"/>
</dbReference>
<dbReference type="InterPro" id="IPR036838">
    <property type="entry name" value="Ribosomal_uS10_dom_sf"/>
</dbReference>
<dbReference type="NCBIfam" id="NF001861">
    <property type="entry name" value="PRK00596.1"/>
    <property type="match status" value="1"/>
</dbReference>
<dbReference type="NCBIfam" id="TIGR01049">
    <property type="entry name" value="rpsJ_bact"/>
    <property type="match status" value="1"/>
</dbReference>
<dbReference type="PANTHER" id="PTHR11700">
    <property type="entry name" value="30S RIBOSOMAL PROTEIN S10 FAMILY MEMBER"/>
    <property type="match status" value="1"/>
</dbReference>
<dbReference type="Pfam" id="PF00338">
    <property type="entry name" value="Ribosomal_S10"/>
    <property type="match status" value="1"/>
</dbReference>
<dbReference type="PRINTS" id="PR00971">
    <property type="entry name" value="RIBOSOMALS10"/>
</dbReference>
<dbReference type="SMART" id="SM01403">
    <property type="entry name" value="Ribosomal_S10"/>
    <property type="match status" value="1"/>
</dbReference>
<dbReference type="SUPFAM" id="SSF54999">
    <property type="entry name" value="Ribosomal protein S10"/>
    <property type="match status" value="1"/>
</dbReference>
<dbReference type="PROSITE" id="PS00361">
    <property type="entry name" value="RIBOSOMAL_S10"/>
    <property type="match status" value="1"/>
</dbReference>
<feature type="chain" id="PRO_0000146582" description="Small ribosomal subunit protein uS10">
    <location>
        <begin position="1"/>
        <end position="102"/>
    </location>
</feature>
<protein>
    <recommendedName>
        <fullName evidence="1">Small ribosomal subunit protein uS10</fullName>
    </recommendedName>
    <alternativeName>
        <fullName evidence="2">30S ribosomal protein S10</fullName>
    </alternativeName>
</protein>
<organism>
    <name type="scientific">Mesorhizobium japonicum (strain LMG 29417 / CECT 9101 / MAFF 303099)</name>
    <name type="common">Mesorhizobium loti (strain MAFF 303099)</name>
    <dbReference type="NCBI Taxonomy" id="266835"/>
    <lineage>
        <taxon>Bacteria</taxon>
        <taxon>Pseudomonadati</taxon>
        <taxon>Pseudomonadota</taxon>
        <taxon>Alphaproteobacteria</taxon>
        <taxon>Hyphomicrobiales</taxon>
        <taxon>Phyllobacteriaceae</taxon>
        <taxon>Mesorhizobium</taxon>
    </lineage>
</organism>
<comment type="function">
    <text evidence="1">Involved in the binding of tRNA to the ribosomes.</text>
</comment>
<comment type="subunit">
    <text evidence="1">Part of the 30S ribosomal subunit.</text>
</comment>
<comment type="similarity">
    <text evidence="1">Belongs to the universal ribosomal protein uS10 family.</text>
</comment>